<gene>
    <name type="ordered locus">MPN_049</name>
    <name type="ORF">D09_orf632</name>
    <name type="ORF">MP105</name>
</gene>
<dbReference type="EMBL" id="U00089">
    <property type="protein sequence ID" value="AAB95753.1"/>
    <property type="molecule type" value="Genomic_DNA"/>
</dbReference>
<dbReference type="PIR" id="S73431">
    <property type="entry name" value="S73431"/>
</dbReference>
<dbReference type="RefSeq" id="NP_109737.1">
    <property type="nucleotide sequence ID" value="NC_000912.1"/>
</dbReference>
<dbReference type="RefSeq" id="WP_010874406.1">
    <property type="nucleotide sequence ID" value="NC_000912.1"/>
</dbReference>
<dbReference type="SMR" id="P75065"/>
<dbReference type="STRING" id="272634.MPN_049"/>
<dbReference type="EnsemblBacteria" id="AAB95753">
    <property type="protein sequence ID" value="AAB95753"/>
    <property type="gene ID" value="MPN_049"/>
</dbReference>
<dbReference type="KEGG" id="mpn:MPN_049"/>
<dbReference type="PATRIC" id="fig|272634.6.peg.49"/>
<dbReference type="HOGENOM" id="CLU_029253_0_0_14"/>
<dbReference type="BioCyc" id="MPNE272634:G1GJ3-71-MONOMER"/>
<dbReference type="Proteomes" id="UP000000808">
    <property type="component" value="Chromosome"/>
</dbReference>
<dbReference type="InterPro" id="IPR004306">
    <property type="entry name" value="DUF237"/>
</dbReference>
<dbReference type="InterPro" id="IPR004319">
    <property type="entry name" value="DUF240"/>
</dbReference>
<dbReference type="Pfam" id="PF03072">
    <property type="entry name" value="DUF237"/>
    <property type="match status" value="1"/>
</dbReference>
<dbReference type="Pfam" id="PF03086">
    <property type="entry name" value="DUF240"/>
    <property type="match status" value="1"/>
</dbReference>
<organism>
    <name type="scientific">Mycoplasma pneumoniae (strain ATCC 29342 / M129 / Subtype 1)</name>
    <name type="common">Mycoplasmoides pneumoniae</name>
    <dbReference type="NCBI Taxonomy" id="272634"/>
    <lineage>
        <taxon>Bacteria</taxon>
        <taxon>Bacillati</taxon>
        <taxon>Mycoplasmatota</taxon>
        <taxon>Mycoplasmoidales</taxon>
        <taxon>Mycoplasmoidaceae</taxon>
        <taxon>Mycoplasmoides</taxon>
    </lineage>
</organism>
<accession>P75065</accession>
<protein>
    <recommendedName>
        <fullName>Uncharacterized protein MPN_049</fullName>
    </recommendedName>
</protein>
<evidence type="ECO:0000305" key="1"/>
<feature type="chain" id="PRO_0000215253" description="Uncharacterized protein MPN_049">
    <location>
        <begin position="1"/>
        <end position="632"/>
    </location>
</feature>
<comment type="similarity">
    <text evidence="1">Belongs to the MG032/MG096/MG288 family.</text>
</comment>
<keyword id="KW-1185">Reference proteome</keyword>
<proteinExistence type="inferred from homology"/>
<reference key="1">
    <citation type="journal article" date="1996" name="Nucleic Acids Res.">
        <title>Complete sequence analysis of the genome of the bacterium Mycoplasma pneumoniae.</title>
        <authorList>
            <person name="Himmelreich R."/>
            <person name="Hilbert H."/>
            <person name="Plagens H."/>
            <person name="Pirkl E."/>
            <person name="Li B.-C."/>
            <person name="Herrmann R."/>
        </authorList>
    </citation>
    <scope>NUCLEOTIDE SEQUENCE [LARGE SCALE GENOMIC DNA]</scope>
    <source>
        <strain>ATCC 29342 / M129 / Subtype 1</strain>
    </source>
</reference>
<sequence>MRFRYKAFLLTLFASTTTLTGFIIPTLSQHGSSTDPSFVALRNNSSLSCDGKSRLLEFGNDLGFSKEETDVLAKQKNWEQNYTNFKKQFEHKLLDPKSFSLTDVYNLFSGFQQSVADTVKLMNELQTQVNKANDIYPVESFQVPKVPQKLFGFVDQGFFPKLNPKGLNIADNVASLFEKYSLKQATLKDFDIVLEKKNDIVLEHKVRYNFALQFHFETTYIGSGGEINLQFALQASTTNFSSLEELQASFSKVGNNLTAQLFWKPVVNKLTSGENDLTHIAQTAVGESLFDSRVDLTSSIINNEAAIKTTQQQFETEVLALFKAEREKALAEYKAEQERIAKELEEQRKELERLKKEQQNKQELVESLYNVANFVSYWEKRGKDVTDKKQLIQALKSAFATNWNEVFQLLTAGMREGIKEYYKHNKPDQSANAKKAFGQNGLAFPRTGFDGIYMSDWLRGELRNKGNINLHLKQNETTVKKIRDDISIEWNESKGGIEFHQTYPYWFEFEVNFKYIGGYSLNWWDAIWAKVAGIPGSWKGEMNLKLVIDGEIHKWMVTKPDYPRTFFQFDDQFDKLWFTLHVSQEISVRDESFMNLLKKQGLDKLDLRTGSTKPPVVDLASYLHYLILADKS</sequence>
<name>Y049_MYCPN</name>